<reference key="1">
    <citation type="journal article" date="2005" name="Nature">
        <title>Sequencing of Aspergillus nidulans and comparative analysis with A. fumigatus and A. oryzae.</title>
        <authorList>
            <person name="Galagan J.E."/>
            <person name="Calvo S.E."/>
            <person name="Cuomo C."/>
            <person name="Ma L.-J."/>
            <person name="Wortman J.R."/>
            <person name="Batzoglou S."/>
            <person name="Lee S.-I."/>
            <person name="Bastuerkmen M."/>
            <person name="Spevak C.C."/>
            <person name="Clutterbuck J."/>
            <person name="Kapitonov V."/>
            <person name="Jurka J."/>
            <person name="Scazzocchio C."/>
            <person name="Farman M.L."/>
            <person name="Butler J."/>
            <person name="Purcell S."/>
            <person name="Harris S."/>
            <person name="Braus G.H."/>
            <person name="Draht O."/>
            <person name="Busch S."/>
            <person name="D'Enfert C."/>
            <person name="Bouchier C."/>
            <person name="Goldman G.H."/>
            <person name="Bell-Pedersen D."/>
            <person name="Griffiths-Jones S."/>
            <person name="Doonan J.H."/>
            <person name="Yu J."/>
            <person name="Vienken K."/>
            <person name="Pain A."/>
            <person name="Freitag M."/>
            <person name="Selker E.U."/>
            <person name="Archer D.B."/>
            <person name="Penalva M.A."/>
            <person name="Oakley B.R."/>
            <person name="Momany M."/>
            <person name="Tanaka T."/>
            <person name="Kumagai T."/>
            <person name="Asai K."/>
            <person name="Machida M."/>
            <person name="Nierman W.C."/>
            <person name="Denning D.W."/>
            <person name="Caddick M.X."/>
            <person name="Hynes M."/>
            <person name="Paoletti M."/>
            <person name="Fischer R."/>
            <person name="Miller B.L."/>
            <person name="Dyer P.S."/>
            <person name="Sachs M.S."/>
            <person name="Osmani S.A."/>
            <person name="Birren B.W."/>
        </authorList>
    </citation>
    <scope>NUCLEOTIDE SEQUENCE [LARGE SCALE GENOMIC DNA]</scope>
    <source>
        <strain>FGSC A4 / ATCC 38163 / CBS 112.46 / NRRL 194 / M139</strain>
    </source>
</reference>
<reference key="2">
    <citation type="journal article" date="2009" name="Fungal Genet. Biol.">
        <title>The 2008 update of the Aspergillus nidulans genome annotation: a community effort.</title>
        <authorList>
            <person name="Wortman J.R."/>
            <person name="Gilsenan J.M."/>
            <person name="Joardar V."/>
            <person name="Deegan J."/>
            <person name="Clutterbuck J."/>
            <person name="Andersen M.R."/>
            <person name="Archer D."/>
            <person name="Bencina M."/>
            <person name="Braus G."/>
            <person name="Coutinho P."/>
            <person name="von Dohren H."/>
            <person name="Doonan J."/>
            <person name="Driessen A.J."/>
            <person name="Durek P."/>
            <person name="Espeso E."/>
            <person name="Fekete E."/>
            <person name="Flipphi M."/>
            <person name="Estrada C.G."/>
            <person name="Geysens S."/>
            <person name="Goldman G."/>
            <person name="de Groot P.W."/>
            <person name="Hansen K."/>
            <person name="Harris S.D."/>
            <person name="Heinekamp T."/>
            <person name="Helmstaedt K."/>
            <person name="Henrissat B."/>
            <person name="Hofmann G."/>
            <person name="Homan T."/>
            <person name="Horio T."/>
            <person name="Horiuchi H."/>
            <person name="James S."/>
            <person name="Jones M."/>
            <person name="Karaffa L."/>
            <person name="Karanyi Z."/>
            <person name="Kato M."/>
            <person name="Keller N."/>
            <person name="Kelly D.E."/>
            <person name="Kiel J.A."/>
            <person name="Kim J.M."/>
            <person name="van der Klei I.J."/>
            <person name="Klis F.M."/>
            <person name="Kovalchuk A."/>
            <person name="Krasevec N."/>
            <person name="Kubicek C.P."/>
            <person name="Liu B."/>
            <person name="Maccabe A."/>
            <person name="Meyer V."/>
            <person name="Mirabito P."/>
            <person name="Miskei M."/>
            <person name="Mos M."/>
            <person name="Mullins J."/>
            <person name="Nelson D.R."/>
            <person name="Nielsen J."/>
            <person name="Oakley B.R."/>
            <person name="Osmani S.A."/>
            <person name="Pakula T."/>
            <person name="Paszewski A."/>
            <person name="Paulsen I."/>
            <person name="Pilsyk S."/>
            <person name="Pocsi I."/>
            <person name="Punt P.J."/>
            <person name="Ram A.F."/>
            <person name="Ren Q."/>
            <person name="Robellet X."/>
            <person name="Robson G."/>
            <person name="Seiboth B."/>
            <person name="van Solingen P."/>
            <person name="Specht T."/>
            <person name="Sun J."/>
            <person name="Taheri-Talesh N."/>
            <person name="Takeshita N."/>
            <person name="Ussery D."/>
            <person name="vanKuyk P.A."/>
            <person name="Visser H."/>
            <person name="van de Vondervoort P.J."/>
            <person name="de Vries R.P."/>
            <person name="Walton J."/>
            <person name="Xiang X."/>
            <person name="Xiong Y."/>
            <person name="Zeng A.P."/>
            <person name="Brandt B.W."/>
            <person name="Cornell M.J."/>
            <person name="van den Hondel C.A."/>
            <person name="Visser J."/>
            <person name="Oliver S.G."/>
            <person name="Turner G."/>
        </authorList>
    </citation>
    <scope>GENOME REANNOTATION</scope>
    <source>
        <strain>FGSC A4 / ATCC 38163 / CBS 112.46 / NRRL 194 / M139</strain>
    </source>
</reference>
<reference key="3">
    <citation type="journal article" date="2000" name="Mol. Gen. Genet.">
        <title>The role of ABC transporters from Aspergillus nidulans in protection against cytotoxic agents and in antibiotic production.</title>
        <authorList>
            <person name="Andrade A.C."/>
            <person name="Van Nistelrooy J.G."/>
            <person name="Peery R.B."/>
            <person name="Skatrud P.L."/>
            <person name="De Waard M.A."/>
        </authorList>
    </citation>
    <scope>FUNCTION</scope>
    <scope>INDUCTION</scope>
</reference>
<reference key="4">
    <citation type="journal article" date="2002" name="Appl. Environ. Microbiol.">
        <title>Quantitative analysis of the relative transcript levels of ABC transporter Atr genes in Aspergillus nidulans by real-time reverse transcription-PCR assay.</title>
        <authorList>
            <person name="Semighini C.P."/>
            <person name="Marins M."/>
            <person name="Goldman M.H."/>
            <person name="Goldman G.H."/>
        </authorList>
    </citation>
    <scope>INDUCTION</scope>
</reference>
<organism>
    <name type="scientific">Emericella nidulans (strain FGSC A4 / ATCC 38163 / CBS 112.46 / NRRL 194 / M139)</name>
    <name type="common">Aspergillus nidulans</name>
    <dbReference type="NCBI Taxonomy" id="227321"/>
    <lineage>
        <taxon>Eukaryota</taxon>
        <taxon>Fungi</taxon>
        <taxon>Dikarya</taxon>
        <taxon>Ascomycota</taxon>
        <taxon>Pezizomycotina</taxon>
        <taxon>Eurotiomycetes</taxon>
        <taxon>Eurotiomycetidae</taxon>
        <taxon>Eurotiales</taxon>
        <taxon>Aspergillaceae</taxon>
        <taxon>Aspergillus</taxon>
        <taxon>Aspergillus subgen. Nidulantes</taxon>
    </lineage>
</organism>
<sequence length="1284" mass="139551">MKSTAESKETPSQDESTTSVPCTEAPLVEEGEEASFGAYKRIFTFAGRTELILQAVAILAACASGAGIALQNLIFGQFVTVITDFTNGISTPADFRDNAAELALYFVYLGIARLVLSYTYNTLLTYAAYRIVRNIRHAYLKAALSQEVAYYDFGSGGSIAAQATSNGKLIQAGASDKIGLLFQGLAAFVTAFIIAFVVQWKLTLICICIPVATIGTTGVVAAVEAGHETRILQIHAQANSFAEGILAGVKAVHAFGMRDSLVRKFDEYLVEAHKVGKKISPLLGLLFSAEYTIIYLGYGLAFWQGIHMFGRGEIGTAGDIFTVLLSVVIASINLTLLAPYSIEFSRAASAAAQLFRLIDRESEINPYGKEGLEPERVLGDVELENVTFSYPTRPGITVLDNFSLKVPAGKVTALVGQSGSGKSTIVGLLERWYNPTSGAIRLDGNLISELNVGWLRRNVRLVQQEPVLFQGSVFDNIRYGLVGTPWENASREEQMERVQEAAKLAYAHEFISELTDGYDTLIGERGGLLSGGQKQRVAIARSVVSQPKVLLLDEATSALDPHAETIVQKALDKAAEGRTTIVIAHKLATIRKADNIVVMSKGHIVEQGTHESLIAKDGVYAGLVKIQNLAVNASAHDNVNEEGEGEDVALLEVTETAVTRYPTSIRGRMNSIKDRDDYENHKHMDMLAALAYLVRECPELKWAYLVVLLGCLGGCAMYPGQAILMSRVVEVFTLSGDAMLDKGDFYASMLIVLAAGCLICYLAVGYATNTIAQHLSHWFRRLILHDMLRQDIQFFDREENTTGALVSRIDSYPHAILELMGYNIALVVIAVLQVVTCGILAIAFSWKLGLVVVFGGIPPLVGAGMVRIRVDSRLDRQTSKKYGTSSSIASEAVNAIRTVSSLAIEETVLRRYTEELDHAVSSSVKPMAATMICFGLTQCIEYWFQALGFWYGCRLVSLGETSMYSFFVAFLSVFFAGQASAQLFQWSTSITKGINATNYIAWLHQLQPTVRETPENHDKGPGSGAPIAMDNVRFSYPLRPDAPILKGVNLKINKGQFIAFVGSSGCGKSTMIAMLERFYDPTTGSITIDASTLTDINPISYRNIVALVQQEPTLFQGTIRDNISLGVFNPNTQPFFSDKDAVKSVSDEQIESALRAANAWDFVSSLPQGIYTPAGSGGSQLSGGQRQRIAIARALIRDPKILLLDEATSALDTESEKIVQKALEGAARDGDRLTVAVAHRLSTIKDANVICVFFGGKIAEMGTHQELIVRGGLYRRMCEAQALD</sequence>
<evidence type="ECO:0000255" key="1"/>
<evidence type="ECO:0000255" key="2">
    <source>
        <dbReference type="PROSITE-ProRule" id="PRU00434"/>
    </source>
</evidence>
<evidence type="ECO:0000255" key="3">
    <source>
        <dbReference type="PROSITE-ProRule" id="PRU00441"/>
    </source>
</evidence>
<evidence type="ECO:0000255" key="4">
    <source>
        <dbReference type="PROSITE-ProRule" id="PRU00498"/>
    </source>
</evidence>
<evidence type="ECO:0000256" key="5">
    <source>
        <dbReference type="SAM" id="MobiDB-lite"/>
    </source>
</evidence>
<evidence type="ECO:0000269" key="6">
    <source>
    </source>
</evidence>
<evidence type="ECO:0000269" key="7">
    <source>
    </source>
</evidence>
<evidence type="ECO:0000303" key="8">
    <source>
    </source>
</evidence>
<evidence type="ECO:0000305" key="9"/>
<evidence type="ECO:0000305" key="10">
    <source>
    </source>
</evidence>
<proteinExistence type="evidence at transcript level"/>
<keyword id="KW-0067">ATP-binding</keyword>
<keyword id="KW-1003">Cell membrane</keyword>
<keyword id="KW-0325">Glycoprotein</keyword>
<keyword id="KW-0472">Membrane</keyword>
<keyword id="KW-0547">Nucleotide-binding</keyword>
<keyword id="KW-1185">Reference proteome</keyword>
<keyword id="KW-0677">Repeat</keyword>
<keyword id="KW-0812">Transmembrane</keyword>
<keyword id="KW-1133">Transmembrane helix</keyword>
<keyword id="KW-0813">Transport</keyword>
<feature type="chain" id="PRO_0000449466" description="ABC multidrug transporter atrC">
    <location>
        <begin position="1"/>
        <end position="1284"/>
    </location>
</feature>
<feature type="transmembrane region" description="Helical" evidence="1 3">
    <location>
        <begin position="55"/>
        <end position="75"/>
    </location>
</feature>
<feature type="transmembrane region" description="Helical" evidence="1 3">
    <location>
        <begin position="99"/>
        <end position="119"/>
    </location>
</feature>
<feature type="transmembrane region" description="Helical" evidence="1 3">
    <location>
        <begin position="178"/>
        <end position="198"/>
    </location>
</feature>
<feature type="transmembrane region" description="Helical" evidence="1 3">
    <location>
        <begin position="203"/>
        <end position="223"/>
    </location>
</feature>
<feature type="transmembrane region" description="Helical" evidence="1 3">
    <location>
        <begin position="282"/>
        <end position="302"/>
    </location>
</feature>
<feature type="transmembrane region" description="Helical" evidence="1 3">
    <location>
        <begin position="320"/>
        <end position="340"/>
    </location>
</feature>
<feature type="transmembrane region" description="Helical" evidence="1 3">
    <location>
        <begin position="705"/>
        <end position="725"/>
    </location>
</feature>
<feature type="transmembrane region" description="Helical" evidence="1 3">
    <location>
        <begin position="745"/>
        <end position="765"/>
    </location>
</feature>
<feature type="transmembrane region" description="Helical" evidence="1 3">
    <location>
        <begin position="824"/>
        <end position="844"/>
    </location>
</feature>
<feature type="transmembrane region" description="Helical" evidence="1 3">
    <location>
        <begin position="846"/>
        <end position="866"/>
    </location>
</feature>
<feature type="transmembrane region" description="Helical" evidence="1 3">
    <location>
        <begin position="931"/>
        <end position="951"/>
    </location>
</feature>
<feature type="transmembrane region" description="Helical" evidence="1 3">
    <location>
        <begin position="955"/>
        <end position="975"/>
    </location>
</feature>
<feature type="domain" description="ABC transmembrane type-1 1" evidence="3">
    <location>
        <begin position="55"/>
        <end position="346"/>
    </location>
</feature>
<feature type="domain" description="ABC transporter 1" evidence="2">
    <location>
        <begin position="381"/>
        <end position="626"/>
    </location>
</feature>
<feature type="domain" description="ABC transmembrane type-1 2" evidence="3">
    <location>
        <begin position="705"/>
        <end position="992"/>
    </location>
</feature>
<feature type="domain" description="ABC transporter 2" evidence="2">
    <location>
        <begin position="1027"/>
        <end position="1280"/>
    </location>
</feature>
<feature type="region of interest" description="Disordered" evidence="5">
    <location>
        <begin position="1"/>
        <end position="24"/>
    </location>
</feature>
<feature type="compositionally biased region" description="Basic and acidic residues" evidence="5">
    <location>
        <begin position="1"/>
        <end position="11"/>
    </location>
</feature>
<feature type="binding site" evidence="2">
    <location>
        <begin position="416"/>
        <end position="423"/>
    </location>
    <ligand>
        <name>ATP</name>
        <dbReference type="ChEBI" id="CHEBI:30616"/>
    </ligand>
</feature>
<feature type="binding site" evidence="2">
    <location>
        <begin position="1062"/>
        <end position="1069"/>
    </location>
    <ligand>
        <name>ATP</name>
        <dbReference type="ChEBI" id="CHEBI:30616"/>
    </ligand>
</feature>
<feature type="glycosylation site" description="N-linked (GlcNAc...) asparagine" evidence="4">
    <location>
        <position position="385"/>
    </location>
</feature>
<feature type="glycosylation site" description="N-linked (GlcNAc...) asparagine" evidence="4">
    <location>
        <position position="401"/>
    </location>
</feature>
<feature type="glycosylation site" description="N-linked (GlcNAc...) asparagine" evidence="4">
    <location>
        <position position="488"/>
    </location>
</feature>
<feature type="glycosylation site" description="N-linked (GlcNAc...) asparagine" evidence="4">
    <location>
        <position position="632"/>
    </location>
</feature>
<feature type="glycosylation site" description="N-linked (GlcNAc...) asparagine" evidence="4">
    <location>
        <position position="800"/>
    </location>
</feature>
<feature type="glycosylation site" description="N-linked (GlcNAc...) asparagine" evidence="4">
    <location>
        <position position="995"/>
    </location>
</feature>
<feature type="glycosylation site" description="N-linked (GlcNAc...) asparagine" evidence="4">
    <location>
        <position position="1122"/>
    </location>
</feature>
<name>ATRC_EMENI</name>
<protein>
    <recommendedName>
        <fullName>ABC multidrug transporter atrC</fullName>
    </recommendedName>
</protein>
<accession>A0A1U8QG99</accession>
<accession>C8VNF2</accession>
<accession>Q5BAT1</accession>
<comment type="function">
    <text evidence="6">Pleiotropic ABC efflux transporter involved in the protection of the cells against a wide range of toxic compounds.</text>
</comment>
<comment type="subcellular location">
    <subcellularLocation>
        <location evidence="10">Cell membrane</location>
        <topology evidence="1">Multi-pass membrane protein</topology>
    </subcellularLocation>
</comment>
<comment type="induction">
    <text evidence="6 7">Expression is strongly increased in the presence of cycloheximide, imazalil, itraconazole, hygromycin, and 4-nitroquinoline oxide (4-NQO).</text>
</comment>
<comment type="similarity">
    <text evidence="9">Belongs to the ABC transporter superfamily. ABCB family. Multidrug resistance exporter (TC 3.A.1.201) subfamily.</text>
</comment>
<dbReference type="EMBL" id="BN001307">
    <property type="protein sequence ID" value="CBF86663.1"/>
    <property type="molecule type" value="Genomic_DNA"/>
</dbReference>
<dbReference type="EMBL" id="AACD01000038">
    <property type="protein sequence ID" value="EAA64460.1"/>
    <property type="molecule type" value="Genomic_DNA"/>
</dbReference>
<dbReference type="RefSeq" id="XP_659953.1">
    <property type="nucleotide sequence ID" value="XM_654861.1"/>
</dbReference>
<dbReference type="SMR" id="A0A1U8QG99"/>
<dbReference type="FunCoup" id="A0A1U8QG99">
    <property type="interactions" value="755"/>
</dbReference>
<dbReference type="GlyCosmos" id="A0A1U8QG99">
    <property type="glycosylation" value="7 sites, No reported glycans"/>
</dbReference>
<dbReference type="EnsemblFungi" id="CBF86663">
    <property type="protein sequence ID" value="CBF86663"/>
    <property type="gene ID" value="ANIA_02349"/>
</dbReference>
<dbReference type="KEGG" id="ani:ANIA_02349"/>
<dbReference type="eggNOG" id="KOG0055">
    <property type="taxonomic scope" value="Eukaryota"/>
</dbReference>
<dbReference type="HOGENOM" id="CLU_000604_17_2_1"/>
<dbReference type="InParanoid" id="A0A1U8QG99"/>
<dbReference type="OMA" id="NYDNHKQ"/>
<dbReference type="OrthoDB" id="6500128at2759"/>
<dbReference type="Proteomes" id="UP000000560">
    <property type="component" value="Chromosome VII"/>
</dbReference>
<dbReference type="GO" id="GO:0016020">
    <property type="term" value="C:membrane"/>
    <property type="evidence" value="ECO:0000318"/>
    <property type="project" value="GO_Central"/>
</dbReference>
<dbReference type="GO" id="GO:0005886">
    <property type="term" value="C:plasma membrane"/>
    <property type="evidence" value="ECO:0007669"/>
    <property type="project" value="UniProtKB-SubCell"/>
</dbReference>
<dbReference type="GO" id="GO:0140359">
    <property type="term" value="F:ABC-type transporter activity"/>
    <property type="evidence" value="ECO:0007669"/>
    <property type="project" value="InterPro"/>
</dbReference>
<dbReference type="GO" id="GO:0005524">
    <property type="term" value="F:ATP binding"/>
    <property type="evidence" value="ECO:0007669"/>
    <property type="project" value="UniProtKB-KW"/>
</dbReference>
<dbReference type="GO" id="GO:0016887">
    <property type="term" value="F:ATP hydrolysis activity"/>
    <property type="evidence" value="ECO:0007669"/>
    <property type="project" value="InterPro"/>
</dbReference>
<dbReference type="GO" id="GO:0042626">
    <property type="term" value="F:ATPase-coupled transmembrane transporter activity"/>
    <property type="evidence" value="ECO:0000318"/>
    <property type="project" value="GO_Central"/>
</dbReference>
<dbReference type="GO" id="GO:0055085">
    <property type="term" value="P:transmembrane transport"/>
    <property type="evidence" value="ECO:0000318"/>
    <property type="project" value="GO_Central"/>
</dbReference>
<dbReference type="CDD" id="cd18577">
    <property type="entry name" value="ABC_6TM_Pgp_ABCB1_D1_like"/>
    <property type="match status" value="1"/>
</dbReference>
<dbReference type="CDD" id="cd18578">
    <property type="entry name" value="ABC_6TM_Pgp_ABCB1_D2_like"/>
    <property type="match status" value="1"/>
</dbReference>
<dbReference type="CDD" id="cd03249">
    <property type="entry name" value="ABC_MTABC3_MDL1_MDL2"/>
    <property type="match status" value="1"/>
</dbReference>
<dbReference type="FunFam" id="3.40.50.300:FF:001530">
    <property type="entry name" value="ABC multidrug transporter (Eurofung)"/>
    <property type="match status" value="1"/>
</dbReference>
<dbReference type="FunFam" id="1.20.1560.10:FF:000057">
    <property type="entry name" value="ABC multidrug transporter SitT"/>
    <property type="match status" value="2"/>
</dbReference>
<dbReference type="FunFam" id="3.40.50.300:FF:000913">
    <property type="entry name" value="ABC multidrug transporter SitT"/>
    <property type="match status" value="1"/>
</dbReference>
<dbReference type="Gene3D" id="1.20.1560.10">
    <property type="entry name" value="ABC transporter type 1, transmembrane domain"/>
    <property type="match status" value="1"/>
</dbReference>
<dbReference type="Gene3D" id="3.40.50.300">
    <property type="entry name" value="P-loop containing nucleotide triphosphate hydrolases"/>
    <property type="match status" value="2"/>
</dbReference>
<dbReference type="InterPro" id="IPR003593">
    <property type="entry name" value="AAA+_ATPase"/>
</dbReference>
<dbReference type="InterPro" id="IPR011527">
    <property type="entry name" value="ABC1_TM_dom"/>
</dbReference>
<dbReference type="InterPro" id="IPR036640">
    <property type="entry name" value="ABC1_TM_sf"/>
</dbReference>
<dbReference type="InterPro" id="IPR003439">
    <property type="entry name" value="ABC_transporter-like_ATP-bd"/>
</dbReference>
<dbReference type="InterPro" id="IPR017871">
    <property type="entry name" value="ABC_transporter-like_CS"/>
</dbReference>
<dbReference type="InterPro" id="IPR027417">
    <property type="entry name" value="P-loop_NTPase"/>
</dbReference>
<dbReference type="InterPro" id="IPR039421">
    <property type="entry name" value="Type_1_exporter"/>
</dbReference>
<dbReference type="PANTHER" id="PTHR43394">
    <property type="entry name" value="ATP-DEPENDENT PERMEASE MDL1, MITOCHONDRIAL"/>
    <property type="match status" value="1"/>
</dbReference>
<dbReference type="PANTHER" id="PTHR43394:SF27">
    <property type="entry name" value="ATP-DEPENDENT TRANSLOCASE ABCB1-LIKE"/>
    <property type="match status" value="1"/>
</dbReference>
<dbReference type="Pfam" id="PF00664">
    <property type="entry name" value="ABC_membrane"/>
    <property type="match status" value="2"/>
</dbReference>
<dbReference type="Pfam" id="PF00005">
    <property type="entry name" value="ABC_tran"/>
    <property type="match status" value="2"/>
</dbReference>
<dbReference type="SMART" id="SM00382">
    <property type="entry name" value="AAA"/>
    <property type="match status" value="2"/>
</dbReference>
<dbReference type="SUPFAM" id="SSF90123">
    <property type="entry name" value="ABC transporter transmembrane region"/>
    <property type="match status" value="2"/>
</dbReference>
<dbReference type="SUPFAM" id="SSF52540">
    <property type="entry name" value="P-loop containing nucleoside triphosphate hydrolases"/>
    <property type="match status" value="2"/>
</dbReference>
<dbReference type="PROSITE" id="PS50929">
    <property type="entry name" value="ABC_TM1F"/>
    <property type="match status" value="2"/>
</dbReference>
<dbReference type="PROSITE" id="PS00211">
    <property type="entry name" value="ABC_TRANSPORTER_1"/>
    <property type="match status" value="2"/>
</dbReference>
<dbReference type="PROSITE" id="PS50893">
    <property type="entry name" value="ABC_TRANSPORTER_2"/>
    <property type="match status" value="2"/>
</dbReference>
<gene>
    <name evidence="8" type="primary">atrC</name>
    <name type="ORF">AN2349</name>
</gene>